<name>RL21_RHIE6</name>
<evidence type="ECO:0000255" key="1">
    <source>
        <dbReference type="HAMAP-Rule" id="MF_01363"/>
    </source>
</evidence>
<evidence type="ECO:0000305" key="2"/>
<organism>
    <name type="scientific">Rhizobium etli (strain CIAT 652)</name>
    <dbReference type="NCBI Taxonomy" id="491916"/>
    <lineage>
        <taxon>Bacteria</taxon>
        <taxon>Pseudomonadati</taxon>
        <taxon>Pseudomonadota</taxon>
        <taxon>Alphaproteobacteria</taxon>
        <taxon>Hyphomicrobiales</taxon>
        <taxon>Rhizobiaceae</taxon>
        <taxon>Rhizobium/Agrobacterium group</taxon>
        <taxon>Rhizobium</taxon>
    </lineage>
</organism>
<sequence>MFAVIKTGGKQYRVAANDVLTIEKLEAAAGDSIEFTEVLVIGEGADAAIGAPFVTGASVKAEVVEQNRGKKVIAFKKRRRQNSKRSRGHRQHHTVVRITDIVAAK</sequence>
<keyword id="KW-0687">Ribonucleoprotein</keyword>
<keyword id="KW-0689">Ribosomal protein</keyword>
<keyword id="KW-0694">RNA-binding</keyword>
<keyword id="KW-0699">rRNA-binding</keyword>
<dbReference type="EMBL" id="CP001074">
    <property type="protein sequence ID" value="ACE93278.1"/>
    <property type="molecule type" value="Genomic_DNA"/>
</dbReference>
<dbReference type="SMR" id="B3PRY8"/>
<dbReference type="KEGG" id="rec:RHECIAT_CH0004351"/>
<dbReference type="eggNOG" id="COG0261">
    <property type="taxonomic scope" value="Bacteria"/>
</dbReference>
<dbReference type="HOGENOM" id="CLU_061463_3_2_5"/>
<dbReference type="Proteomes" id="UP000008817">
    <property type="component" value="Chromosome"/>
</dbReference>
<dbReference type="GO" id="GO:0005737">
    <property type="term" value="C:cytoplasm"/>
    <property type="evidence" value="ECO:0007669"/>
    <property type="project" value="UniProtKB-ARBA"/>
</dbReference>
<dbReference type="GO" id="GO:1990904">
    <property type="term" value="C:ribonucleoprotein complex"/>
    <property type="evidence" value="ECO:0007669"/>
    <property type="project" value="UniProtKB-KW"/>
</dbReference>
<dbReference type="GO" id="GO:0005840">
    <property type="term" value="C:ribosome"/>
    <property type="evidence" value="ECO:0007669"/>
    <property type="project" value="UniProtKB-KW"/>
</dbReference>
<dbReference type="GO" id="GO:0019843">
    <property type="term" value="F:rRNA binding"/>
    <property type="evidence" value="ECO:0007669"/>
    <property type="project" value="UniProtKB-UniRule"/>
</dbReference>
<dbReference type="GO" id="GO:0003735">
    <property type="term" value="F:structural constituent of ribosome"/>
    <property type="evidence" value="ECO:0007669"/>
    <property type="project" value="InterPro"/>
</dbReference>
<dbReference type="GO" id="GO:0006412">
    <property type="term" value="P:translation"/>
    <property type="evidence" value="ECO:0007669"/>
    <property type="project" value="UniProtKB-UniRule"/>
</dbReference>
<dbReference type="HAMAP" id="MF_01363">
    <property type="entry name" value="Ribosomal_bL21"/>
    <property type="match status" value="1"/>
</dbReference>
<dbReference type="InterPro" id="IPR028909">
    <property type="entry name" value="bL21-like"/>
</dbReference>
<dbReference type="InterPro" id="IPR036164">
    <property type="entry name" value="bL21-like_sf"/>
</dbReference>
<dbReference type="InterPro" id="IPR001787">
    <property type="entry name" value="Ribosomal_bL21"/>
</dbReference>
<dbReference type="NCBIfam" id="TIGR00061">
    <property type="entry name" value="L21"/>
    <property type="match status" value="1"/>
</dbReference>
<dbReference type="PANTHER" id="PTHR21349">
    <property type="entry name" value="50S RIBOSOMAL PROTEIN L21"/>
    <property type="match status" value="1"/>
</dbReference>
<dbReference type="PANTHER" id="PTHR21349:SF0">
    <property type="entry name" value="LARGE RIBOSOMAL SUBUNIT PROTEIN BL21M"/>
    <property type="match status" value="1"/>
</dbReference>
<dbReference type="Pfam" id="PF00829">
    <property type="entry name" value="Ribosomal_L21p"/>
    <property type="match status" value="1"/>
</dbReference>
<dbReference type="SUPFAM" id="SSF141091">
    <property type="entry name" value="L21p-like"/>
    <property type="match status" value="1"/>
</dbReference>
<feature type="chain" id="PRO_1000143839" description="Large ribosomal subunit protein bL21">
    <location>
        <begin position="1"/>
        <end position="105"/>
    </location>
</feature>
<accession>B3PRY8</accession>
<reference key="1">
    <citation type="journal article" date="2010" name="Appl. Environ. Microbiol.">
        <title>Conserved symbiotic plasmid DNA sequences in the multireplicon pangenomic structure of Rhizobium etli.</title>
        <authorList>
            <person name="Gonzalez V."/>
            <person name="Acosta J.L."/>
            <person name="Santamaria R.I."/>
            <person name="Bustos P."/>
            <person name="Fernandez J.L."/>
            <person name="Hernandez Gonzalez I.L."/>
            <person name="Diaz R."/>
            <person name="Flores M."/>
            <person name="Palacios R."/>
            <person name="Mora J."/>
            <person name="Davila G."/>
        </authorList>
    </citation>
    <scope>NUCLEOTIDE SEQUENCE [LARGE SCALE GENOMIC DNA]</scope>
    <source>
        <strain>CIAT 652</strain>
    </source>
</reference>
<comment type="function">
    <text evidence="1">This protein binds to 23S rRNA in the presence of protein L20.</text>
</comment>
<comment type="subunit">
    <text evidence="1">Part of the 50S ribosomal subunit. Contacts protein L20.</text>
</comment>
<comment type="similarity">
    <text evidence="1">Belongs to the bacterial ribosomal protein bL21 family.</text>
</comment>
<protein>
    <recommendedName>
        <fullName evidence="1">Large ribosomal subunit protein bL21</fullName>
    </recommendedName>
    <alternativeName>
        <fullName evidence="2">50S ribosomal protein L21</fullName>
    </alternativeName>
</protein>
<gene>
    <name evidence="1" type="primary">rplU</name>
    <name type="ordered locus">RHECIAT_CH0004351</name>
</gene>
<proteinExistence type="inferred from homology"/>